<feature type="chain" id="PRO_0000132478" description="Small ribosomal subunit protein uS4">
    <location>
        <begin position="1"/>
        <end position="202"/>
    </location>
</feature>
<feature type="domain" description="S4 RNA-binding" evidence="1">
    <location>
        <begin position="90"/>
        <end position="154"/>
    </location>
</feature>
<feature type="region of interest" description="Disordered" evidence="2">
    <location>
        <begin position="23"/>
        <end position="42"/>
    </location>
</feature>
<accession>Q5MZ57</accession>
<comment type="function">
    <text evidence="1">One of the primary rRNA binding proteins, it binds directly to 16S rRNA where it nucleates assembly of the body of the 30S subunit.</text>
</comment>
<comment type="function">
    <text evidence="1">With S5 and S12 plays an important role in translational accuracy.</text>
</comment>
<comment type="subunit">
    <text evidence="1">Part of the 30S ribosomal subunit. Contacts protein S5. The interaction surface between S4 and S5 is involved in control of translational fidelity.</text>
</comment>
<comment type="similarity">
    <text evidence="1">Belongs to the universal ribosomal protein uS4 family.</text>
</comment>
<gene>
    <name evidence="1" type="primary">rpsD</name>
    <name evidence="1" type="synonym">rps4</name>
    <name type="ordered locus">syc2473_d</name>
</gene>
<proteinExistence type="inferred from homology"/>
<dbReference type="EMBL" id="AP008231">
    <property type="protein sequence ID" value="BAD80663.1"/>
    <property type="molecule type" value="Genomic_DNA"/>
</dbReference>
<dbReference type="RefSeq" id="WP_011244783.1">
    <property type="nucleotide sequence ID" value="NZ_CP085785.1"/>
</dbReference>
<dbReference type="SMR" id="Q5MZ57"/>
<dbReference type="GeneID" id="72430480"/>
<dbReference type="KEGG" id="syc:syc2473_d"/>
<dbReference type="eggNOG" id="COG0522">
    <property type="taxonomic scope" value="Bacteria"/>
</dbReference>
<dbReference type="Proteomes" id="UP000001175">
    <property type="component" value="Chromosome"/>
</dbReference>
<dbReference type="GO" id="GO:0015935">
    <property type="term" value="C:small ribosomal subunit"/>
    <property type="evidence" value="ECO:0007669"/>
    <property type="project" value="InterPro"/>
</dbReference>
<dbReference type="GO" id="GO:0019843">
    <property type="term" value="F:rRNA binding"/>
    <property type="evidence" value="ECO:0007669"/>
    <property type="project" value="UniProtKB-UniRule"/>
</dbReference>
<dbReference type="GO" id="GO:0003735">
    <property type="term" value="F:structural constituent of ribosome"/>
    <property type="evidence" value="ECO:0007669"/>
    <property type="project" value="InterPro"/>
</dbReference>
<dbReference type="GO" id="GO:0042274">
    <property type="term" value="P:ribosomal small subunit biogenesis"/>
    <property type="evidence" value="ECO:0007669"/>
    <property type="project" value="TreeGrafter"/>
</dbReference>
<dbReference type="GO" id="GO:0006412">
    <property type="term" value="P:translation"/>
    <property type="evidence" value="ECO:0007669"/>
    <property type="project" value="UniProtKB-UniRule"/>
</dbReference>
<dbReference type="CDD" id="cd00165">
    <property type="entry name" value="S4"/>
    <property type="match status" value="1"/>
</dbReference>
<dbReference type="FunFam" id="3.10.290.10:FF:000001">
    <property type="entry name" value="30S ribosomal protein S4"/>
    <property type="match status" value="1"/>
</dbReference>
<dbReference type="FunFam" id="1.10.1050.10:FF:000002">
    <property type="entry name" value="30S ribosomal protein S4, chloroplastic"/>
    <property type="match status" value="1"/>
</dbReference>
<dbReference type="Gene3D" id="1.10.1050.10">
    <property type="entry name" value="Ribosomal Protein S4 Delta 41, Chain A, domain 1"/>
    <property type="match status" value="1"/>
</dbReference>
<dbReference type="Gene3D" id="3.10.290.10">
    <property type="entry name" value="RNA-binding S4 domain"/>
    <property type="match status" value="1"/>
</dbReference>
<dbReference type="HAMAP" id="MF_01306_B">
    <property type="entry name" value="Ribosomal_uS4_B"/>
    <property type="match status" value="1"/>
</dbReference>
<dbReference type="InterPro" id="IPR022801">
    <property type="entry name" value="Ribosomal_uS4"/>
</dbReference>
<dbReference type="InterPro" id="IPR005709">
    <property type="entry name" value="Ribosomal_uS4_bac-type"/>
</dbReference>
<dbReference type="InterPro" id="IPR018079">
    <property type="entry name" value="Ribosomal_uS4_CS"/>
</dbReference>
<dbReference type="InterPro" id="IPR001912">
    <property type="entry name" value="Ribosomal_uS4_N"/>
</dbReference>
<dbReference type="InterPro" id="IPR002942">
    <property type="entry name" value="S4_RNA-bd"/>
</dbReference>
<dbReference type="InterPro" id="IPR036986">
    <property type="entry name" value="S4_RNA-bd_sf"/>
</dbReference>
<dbReference type="NCBIfam" id="NF003717">
    <property type="entry name" value="PRK05327.1"/>
    <property type="match status" value="1"/>
</dbReference>
<dbReference type="NCBIfam" id="TIGR01017">
    <property type="entry name" value="rpsD_bact"/>
    <property type="match status" value="1"/>
</dbReference>
<dbReference type="PANTHER" id="PTHR11831">
    <property type="entry name" value="30S 40S RIBOSOMAL PROTEIN"/>
    <property type="match status" value="1"/>
</dbReference>
<dbReference type="PANTHER" id="PTHR11831:SF4">
    <property type="entry name" value="SMALL RIBOSOMAL SUBUNIT PROTEIN US4M"/>
    <property type="match status" value="1"/>
</dbReference>
<dbReference type="Pfam" id="PF00163">
    <property type="entry name" value="Ribosomal_S4"/>
    <property type="match status" value="1"/>
</dbReference>
<dbReference type="Pfam" id="PF01479">
    <property type="entry name" value="S4"/>
    <property type="match status" value="1"/>
</dbReference>
<dbReference type="SMART" id="SM01390">
    <property type="entry name" value="Ribosomal_S4"/>
    <property type="match status" value="1"/>
</dbReference>
<dbReference type="SMART" id="SM00363">
    <property type="entry name" value="S4"/>
    <property type="match status" value="1"/>
</dbReference>
<dbReference type="SUPFAM" id="SSF55174">
    <property type="entry name" value="Alpha-L RNA-binding motif"/>
    <property type="match status" value="1"/>
</dbReference>
<dbReference type="PROSITE" id="PS00632">
    <property type="entry name" value="RIBOSOMAL_S4"/>
    <property type="match status" value="1"/>
</dbReference>
<dbReference type="PROSITE" id="PS50889">
    <property type="entry name" value="S4"/>
    <property type="match status" value="1"/>
</dbReference>
<sequence>MSRYRGPRLRIVRRLGDLPGLTRKAARRSYPPGQHGQARRKRSEYAIRLEEKQKLRFNYGLSERQLVRYVKKARRMQGSTGTNLLQLLEMRLDNLVFRLGFAPTIPGARQLVNHGHVTVNGRVVDIASYNCRPGEVIGVRQREASRKLVTANLEYPGLANVPVHLDFDKNKLEAKVTGACEREWVALQINELLVVEYYSRKV</sequence>
<evidence type="ECO:0000255" key="1">
    <source>
        <dbReference type="HAMAP-Rule" id="MF_01306"/>
    </source>
</evidence>
<evidence type="ECO:0000256" key="2">
    <source>
        <dbReference type="SAM" id="MobiDB-lite"/>
    </source>
</evidence>
<evidence type="ECO:0000305" key="3"/>
<name>RS4_SYNP6</name>
<organism>
    <name type="scientific">Synechococcus sp. (strain ATCC 27144 / PCC 6301 / SAUG 1402/1)</name>
    <name type="common">Anacystis nidulans</name>
    <dbReference type="NCBI Taxonomy" id="269084"/>
    <lineage>
        <taxon>Bacteria</taxon>
        <taxon>Bacillati</taxon>
        <taxon>Cyanobacteriota</taxon>
        <taxon>Cyanophyceae</taxon>
        <taxon>Synechococcales</taxon>
        <taxon>Synechococcaceae</taxon>
        <taxon>Synechococcus</taxon>
    </lineage>
</organism>
<protein>
    <recommendedName>
        <fullName evidence="1">Small ribosomal subunit protein uS4</fullName>
    </recommendedName>
    <alternativeName>
        <fullName evidence="3">30S ribosomal protein S4</fullName>
    </alternativeName>
</protein>
<reference key="1">
    <citation type="journal article" date="2007" name="Photosyn. Res.">
        <title>Complete nucleotide sequence of the freshwater unicellular cyanobacterium Synechococcus elongatus PCC 6301 chromosome: gene content and organization.</title>
        <authorList>
            <person name="Sugita C."/>
            <person name="Ogata K."/>
            <person name="Shikata M."/>
            <person name="Jikuya H."/>
            <person name="Takano J."/>
            <person name="Furumichi M."/>
            <person name="Kanehisa M."/>
            <person name="Omata T."/>
            <person name="Sugiura M."/>
            <person name="Sugita M."/>
        </authorList>
    </citation>
    <scope>NUCLEOTIDE SEQUENCE [LARGE SCALE GENOMIC DNA]</scope>
    <source>
        <strain>ATCC 27144 / PCC 6301 / SAUG 1402/1</strain>
    </source>
</reference>
<keyword id="KW-0687">Ribonucleoprotein</keyword>
<keyword id="KW-0689">Ribosomal protein</keyword>
<keyword id="KW-0694">RNA-binding</keyword>
<keyword id="KW-0699">rRNA-binding</keyword>